<reference key="1">
    <citation type="journal article" date="1997" name="Mol. Phylogenet. Evol.">
        <title>A multigene assessment of phylogenetic relationships within the dasyurid marsupial subfamily Sminthopsinae.</title>
        <authorList>
            <person name="Krajewski C."/>
            <person name="Blacket M."/>
            <person name="Buckley L."/>
            <person name="Westerman M."/>
        </authorList>
    </citation>
    <scope>NUCLEOTIDE SEQUENCE [GENOMIC DNA]</scope>
</reference>
<accession>O18747</accession>
<gene>
    <name type="primary">PRM1</name>
</gene>
<organism>
    <name type="scientific">Planigale gilesi</name>
    <name type="common">Flat-skulled marsupial mouse</name>
    <dbReference type="NCBI Taxonomy" id="32556"/>
    <lineage>
        <taxon>Eukaryota</taxon>
        <taxon>Metazoa</taxon>
        <taxon>Chordata</taxon>
        <taxon>Craniata</taxon>
        <taxon>Vertebrata</taxon>
        <taxon>Euteleostomi</taxon>
        <taxon>Mammalia</taxon>
        <taxon>Metatheria</taxon>
        <taxon>Dasyuromorphia</taxon>
        <taxon>Dasyuridae</taxon>
        <taxon>Planigale</taxon>
    </lineage>
</organism>
<protein>
    <recommendedName>
        <fullName>Sperm protamine P1</fullName>
    </recommendedName>
</protein>
<dbReference type="EMBL" id="AF001593">
    <property type="protein sequence ID" value="AAB91383.1"/>
    <property type="molecule type" value="Genomic_DNA"/>
</dbReference>
<dbReference type="GO" id="GO:0000786">
    <property type="term" value="C:nucleosome"/>
    <property type="evidence" value="ECO:0007669"/>
    <property type="project" value="UniProtKB-KW"/>
</dbReference>
<dbReference type="GO" id="GO:0005634">
    <property type="term" value="C:nucleus"/>
    <property type="evidence" value="ECO:0007669"/>
    <property type="project" value="UniProtKB-SubCell"/>
</dbReference>
<dbReference type="GO" id="GO:0003677">
    <property type="term" value="F:DNA binding"/>
    <property type="evidence" value="ECO:0007669"/>
    <property type="project" value="UniProtKB-KW"/>
</dbReference>
<dbReference type="GO" id="GO:0030154">
    <property type="term" value="P:cell differentiation"/>
    <property type="evidence" value="ECO:0007669"/>
    <property type="project" value="UniProtKB-KW"/>
</dbReference>
<dbReference type="GO" id="GO:0030261">
    <property type="term" value="P:chromosome condensation"/>
    <property type="evidence" value="ECO:0007669"/>
    <property type="project" value="UniProtKB-KW"/>
</dbReference>
<dbReference type="GO" id="GO:0007283">
    <property type="term" value="P:spermatogenesis"/>
    <property type="evidence" value="ECO:0007669"/>
    <property type="project" value="UniProtKB-KW"/>
</dbReference>
<proteinExistence type="evidence at transcript level"/>
<comment type="function">
    <text>Protamines substitute for histones in the chromatin of sperm during the haploid phase of spermatogenesis. They compact sperm DNA into a highly condensed, stable and inactive complex.</text>
</comment>
<comment type="subcellular location">
    <subcellularLocation>
        <location>Nucleus</location>
    </subcellularLocation>
    <subcellularLocation>
        <location>Chromosome</location>
    </subcellularLocation>
</comment>
<comment type="tissue specificity">
    <text>Testis.</text>
</comment>
<comment type="similarity">
    <text evidence="2">Belongs to the protamine P1 family.</text>
</comment>
<sequence>MARCRRHSRSRSRSRNQCQRRRRRHYNRRRTYRRSRRHSRRRRVRRRGCSCRRCSRRRRRRC</sequence>
<feature type="chain" id="PRO_0000191533" description="Sperm protamine P1">
    <location>
        <begin position="1"/>
        <end position="62"/>
    </location>
</feature>
<feature type="region of interest" description="Disordered" evidence="1">
    <location>
        <begin position="1"/>
        <end position="46"/>
    </location>
</feature>
<name>HSP1_PLAGI</name>
<evidence type="ECO:0000256" key="1">
    <source>
        <dbReference type="SAM" id="MobiDB-lite"/>
    </source>
</evidence>
<evidence type="ECO:0000305" key="2"/>
<keyword id="KW-0158">Chromosome</keyword>
<keyword id="KW-0217">Developmental protein</keyword>
<keyword id="KW-0221">Differentiation</keyword>
<keyword id="KW-0226">DNA condensation</keyword>
<keyword id="KW-0238">DNA-binding</keyword>
<keyword id="KW-0544">Nucleosome core</keyword>
<keyword id="KW-0539">Nucleus</keyword>
<keyword id="KW-0744">Spermatogenesis</keyword>